<comment type="function">
    <text>Required for insulin-stimulated glucose transport and glucose transporter SLC2A4/GLUT4 translocation from intracellular glucose storage vesicle (GSV) to the plasma membrane (PM) in adipocytes. Binds phospholipid membranes in a calcium-dependent manner and is necessary for the optimal membrane fusion between SLC2A4/GLUT4 GSV and the PM.</text>
</comment>
<comment type="cofactor">
    <cofactor evidence="4">
        <name>Ca(2+)</name>
        <dbReference type="ChEBI" id="CHEBI:29108"/>
    </cofactor>
    <text evidence="4">Binds 3 Ca(2+) ions per C2 domain.</text>
</comment>
<comment type="subcellular location">
    <subcellularLocation>
        <location evidence="1">Cytoplasmic vesicle membrane</location>
    </subcellularLocation>
    <subcellularLocation>
        <location evidence="1">Cytoplasm</location>
        <location evidence="1">Cell cortex</location>
    </subcellularLocation>
    <subcellularLocation>
        <location evidence="1">Cell membrane</location>
    </subcellularLocation>
    <subcellularLocation>
        <location evidence="1">Cell projection</location>
        <location evidence="1">Ruffle</location>
    </subcellularLocation>
    <text evidence="1">Dynamically associated with GLUT4-containing glucose storage vesicles (GSV) and plasma membrane in response to insulin stimulation.</text>
</comment>
<comment type="domain">
    <text evidence="1">The C2 domain binds to calcium and membrane lipids.</text>
</comment>
<comment type="PTM">
    <text evidence="1">Phosphorylated on Ser-197 by active myristoylated kinase AKT2; insulin-stimulated phosphorylation by AKT2 regulates SLC2A4/GLUT4 translocation into the plasma membrane.</text>
</comment>
<organism>
    <name type="scientific">Pongo abelii</name>
    <name type="common">Sumatran orangutan</name>
    <name type="synonym">Pongo pygmaeus abelii</name>
    <dbReference type="NCBI Taxonomy" id="9601"/>
    <lineage>
        <taxon>Eukaryota</taxon>
        <taxon>Metazoa</taxon>
        <taxon>Chordata</taxon>
        <taxon>Craniata</taxon>
        <taxon>Vertebrata</taxon>
        <taxon>Euteleostomi</taxon>
        <taxon>Mammalia</taxon>
        <taxon>Eutheria</taxon>
        <taxon>Euarchontoglires</taxon>
        <taxon>Primates</taxon>
        <taxon>Haplorrhini</taxon>
        <taxon>Catarrhini</taxon>
        <taxon>Hominidae</taxon>
        <taxon>Pongo</taxon>
    </lineage>
</organism>
<proteinExistence type="evidence at transcript level"/>
<gene>
    <name type="primary">C2CD5</name>
</gene>
<name>C2CD5_PONAB</name>
<keyword id="KW-0106">Calcium</keyword>
<keyword id="KW-1003">Cell membrane</keyword>
<keyword id="KW-0966">Cell projection</keyword>
<keyword id="KW-0963">Cytoplasm</keyword>
<keyword id="KW-0968">Cytoplasmic vesicle</keyword>
<keyword id="KW-0446">Lipid-binding</keyword>
<keyword id="KW-0472">Membrane</keyword>
<keyword id="KW-0479">Metal-binding</keyword>
<keyword id="KW-0597">Phosphoprotein</keyword>
<keyword id="KW-0653">Protein transport</keyword>
<keyword id="KW-1185">Reference proteome</keyword>
<keyword id="KW-0813">Transport</keyword>
<sequence length="1000" mass="110366">MPGKLKVKIVAGRHLPVMDRASDLTDAFVEVKFGNTTFKTDVYLKSLNPQWNSEWFKFEVDDEDLQDEPLQITVLDHDTYSANDAIGKVYIDIDPLLYSEAATVISGWFPIYDTIHGIRGEINVVVKVDLFNDLNRFRQSSCGVKFFCTTAIPKCYRAVIIHGFVEELVVNEDPEYQWIDRIRTPRASNEARQRLISLMSGELQRKIGLKVLEMRGNAVVGYLQCFDLEGESGLVVRAIGTACTLDKLSSPAAFLPACNSPSKEMKEIPFNEDPNPNTHSSGPSTPLKNQTYSFSPSKSYSRQSSSSDTDLSLTPKTGMGSGSAGKEGGPFKALLRQQTQSALEQREFPFFTLTAFPPGFLVHVGGVVSAGSVKLLDRIHNPDEPETRDAWWAEIRQEIKSLAKALGCHAVVGYSESTSICEEVCILSASGTAAVLNPRFLQDGTVEGCLEQRLEENLPTRCGFCHIPYDELNMPFPAHLTYCYNCRKQKVPDVLFTTIDLPTDATVIGKGCLIQARLCRLKKKAQAEANATAISNLLPFIEYEVHTQLMNKLKLKGMNALFGLRIQITVGENMLMGLASATGVYLAALPTPGGIQIAGKTPNDGSYEQHISHMQKKINDTIAKNKELYEINPPEISEEIIGSPIPEPRQRSRLLRSQSESSDEVTELDLSHGKKDAFVLEIDDTDAMEDVHSLLTDVPPPSGFYSCNTEIMPGINNWTSEIQMFTSVRVIRLSSLNLTNQALNKNFNDLCENLLKSLYFKLRSMIPCCLCHVNFTVSLPEKEINQGTSTASPKNFDKKQALQTTKTPVEKSLQRASTDNEELLQFPLELCSDSFPSHPFPPAKAVTVERASPVGDGNFRNRSAPPCANSTVGVVKMTPLSFIPGAKITKYLGIINMFFIRETTSLREEGGVSGFLHAFIAEVFAMVRAHVAALGGNAVVSYIMKQCVFMENPNKNQAQCLINVSGDAVVFVRESDLEVVSSQQPTTNCQSSCTESEVTT</sequence>
<reference key="1">
    <citation type="submission" date="2004-11" db="EMBL/GenBank/DDBJ databases">
        <authorList>
            <consortium name="The German cDNA consortium"/>
        </authorList>
    </citation>
    <scope>NUCLEOTIDE SEQUENCE [LARGE SCALE MRNA]</scope>
    <source>
        <tissue>Kidney</tissue>
    </source>
</reference>
<evidence type="ECO:0000250" key="1"/>
<evidence type="ECO:0000250" key="2">
    <source>
        <dbReference type="UniProtKB" id="Q7TPS5"/>
    </source>
</evidence>
<evidence type="ECO:0000250" key="3">
    <source>
        <dbReference type="UniProtKB" id="Q86YS7"/>
    </source>
</evidence>
<evidence type="ECO:0000255" key="4">
    <source>
        <dbReference type="PROSITE-ProRule" id="PRU00041"/>
    </source>
</evidence>
<evidence type="ECO:0000256" key="5">
    <source>
        <dbReference type="SAM" id="MobiDB-lite"/>
    </source>
</evidence>
<protein>
    <recommendedName>
        <fullName>C2 domain-containing protein 5</fullName>
    </recommendedName>
    <alternativeName>
        <fullName>138 kDa C2 domain-containing phosphoprotein</fullName>
    </alternativeName>
</protein>
<accession>Q5RDC8</accession>
<feature type="chain" id="PRO_0000247452" description="C2 domain-containing protein 5">
    <location>
        <begin position="1"/>
        <end position="1000"/>
    </location>
</feature>
<feature type="domain" description="C2" evidence="4">
    <location>
        <begin position="1"/>
        <end position="109"/>
    </location>
</feature>
<feature type="region of interest" description="Disordered" evidence="5">
    <location>
        <begin position="265"/>
        <end position="330"/>
    </location>
</feature>
<feature type="region of interest" description="Disordered" evidence="5">
    <location>
        <begin position="639"/>
        <end position="669"/>
    </location>
</feature>
<feature type="compositionally biased region" description="Polar residues" evidence="5">
    <location>
        <begin position="274"/>
        <end position="289"/>
    </location>
</feature>
<feature type="compositionally biased region" description="Low complexity" evidence="5">
    <location>
        <begin position="290"/>
        <end position="318"/>
    </location>
</feature>
<feature type="compositionally biased region" description="Gly residues" evidence="5">
    <location>
        <begin position="319"/>
        <end position="328"/>
    </location>
</feature>
<feature type="binding site" evidence="4">
    <location>
        <position position="19"/>
    </location>
    <ligand>
        <name>Ca(2+)</name>
        <dbReference type="ChEBI" id="CHEBI:29108"/>
        <label>1</label>
    </ligand>
</feature>
<feature type="binding site" evidence="4">
    <location>
        <position position="19"/>
    </location>
    <ligand>
        <name>Ca(2+)</name>
        <dbReference type="ChEBI" id="CHEBI:29108"/>
        <label>2</label>
    </ligand>
</feature>
<feature type="binding site" evidence="4">
    <location>
        <position position="26"/>
    </location>
    <ligand>
        <name>Ca(2+)</name>
        <dbReference type="ChEBI" id="CHEBI:29108"/>
        <label>1</label>
    </ligand>
</feature>
<feature type="binding site" evidence="4">
    <location>
        <position position="76"/>
    </location>
    <ligand>
        <name>Ca(2+)</name>
        <dbReference type="ChEBI" id="CHEBI:29108"/>
        <label>1</label>
    </ligand>
</feature>
<feature type="binding site" evidence="4">
    <location>
        <position position="76"/>
    </location>
    <ligand>
        <name>Ca(2+)</name>
        <dbReference type="ChEBI" id="CHEBI:29108"/>
        <label>2</label>
    </ligand>
</feature>
<feature type="binding site" evidence="4">
    <location>
        <position position="78"/>
    </location>
    <ligand>
        <name>Ca(2+)</name>
        <dbReference type="ChEBI" id="CHEBI:29108"/>
        <label>1</label>
    </ligand>
</feature>
<feature type="binding site" evidence="4">
    <location>
        <position position="78"/>
    </location>
    <ligand>
        <name>Ca(2+)</name>
        <dbReference type="ChEBI" id="CHEBI:29108"/>
        <label>2</label>
    </ligand>
</feature>
<feature type="binding site" evidence="4">
    <location>
        <position position="78"/>
    </location>
    <ligand>
        <name>Ca(2+)</name>
        <dbReference type="ChEBI" id="CHEBI:29108"/>
        <label>3</label>
    </ligand>
</feature>
<feature type="binding site" evidence="4">
    <location>
        <position position="81"/>
    </location>
    <ligand>
        <name>Ca(2+)</name>
        <dbReference type="ChEBI" id="CHEBI:29108"/>
        <label>3</label>
    </ligand>
</feature>
<feature type="binding site" evidence="4">
    <location>
        <position position="84"/>
    </location>
    <ligand>
        <name>Ca(2+)</name>
        <dbReference type="ChEBI" id="CHEBI:29108"/>
        <label>2</label>
    </ligand>
</feature>
<feature type="binding site" evidence="4">
    <location>
        <position position="84"/>
    </location>
    <ligand>
        <name>Ca(2+)</name>
        <dbReference type="ChEBI" id="CHEBI:29108"/>
        <label>3</label>
    </ligand>
</feature>
<feature type="modified residue" description="Phosphoserine; by PKB/AKT2" evidence="3">
    <location>
        <position position="197"/>
    </location>
</feature>
<feature type="modified residue" description="Phosphoserine" evidence="3">
    <location>
        <position position="200"/>
    </location>
</feature>
<feature type="modified residue" description="Phosphoserine" evidence="3">
    <location>
        <position position="260"/>
    </location>
</feature>
<feature type="modified residue" description="Phosphoserine" evidence="3">
    <location>
        <position position="293"/>
    </location>
</feature>
<feature type="modified residue" description="Phosphoserine" evidence="3">
    <location>
        <position position="295"/>
    </location>
</feature>
<feature type="modified residue" description="Phosphoserine" evidence="2">
    <location>
        <position position="304"/>
    </location>
</feature>
<feature type="modified residue" description="Phosphoserine" evidence="3">
    <location>
        <position position="305"/>
    </location>
</feature>
<feature type="modified residue" description="Phosphoserine" evidence="2">
    <location>
        <position position="306"/>
    </location>
</feature>
<feature type="modified residue" description="Phosphothreonine" evidence="3">
    <location>
        <position position="317"/>
    </location>
</feature>
<feature type="modified residue" description="Phosphoserine" evidence="3">
    <location>
        <position position="323"/>
    </location>
</feature>
<feature type="modified residue" description="Phosphothreonine" evidence="3">
    <location>
        <position position="601"/>
    </location>
</feature>
<feature type="modified residue" description="Phosphoserine" evidence="3">
    <location>
        <position position="643"/>
    </location>
</feature>
<feature type="modified residue" description="Phosphoserine" evidence="2">
    <location>
        <position position="657"/>
    </location>
</feature>
<feature type="modified residue" description="Phosphoserine" evidence="3">
    <location>
        <position position="659"/>
    </location>
</feature>
<feature type="modified residue" description="Phosphoserine" evidence="2">
    <location>
        <position position="661"/>
    </location>
</feature>
<feature type="modified residue" description="Phosphoserine" evidence="3">
    <location>
        <position position="662"/>
    </location>
</feature>
<feature type="modified residue" description="Phosphothreonine" evidence="3">
    <location>
        <position position="666"/>
    </location>
</feature>
<feature type="modified residue" description="Phosphoserine" evidence="3">
    <location>
        <position position="671"/>
    </location>
</feature>
<feature type="modified residue" description="Phosphothreonine" evidence="3">
    <location>
        <position position="807"/>
    </location>
</feature>
<feature type="modified residue" description="Phosphoserine" evidence="2">
    <location>
        <position position="817"/>
    </location>
</feature>
<feature type="modified residue" description="Phosphoserine" evidence="3">
    <location>
        <position position="852"/>
    </location>
</feature>
<dbReference type="EMBL" id="CR857986">
    <property type="protein sequence ID" value="CAH90229.1"/>
    <property type="molecule type" value="mRNA"/>
</dbReference>
<dbReference type="RefSeq" id="NP_001125095.1">
    <property type="nucleotide sequence ID" value="NM_001131623.1"/>
</dbReference>
<dbReference type="SMR" id="Q5RDC8"/>
<dbReference type="FunCoup" id="Q5RDC8">
    <property type="interactions" value="3505"/>
</dbReference>
<dbReference type="STRING" id="9601.ENSPPYP00000004981"/>
<dbReference type="GeneID" id="100171977"/>
<dbReference type="KEGG" id="pon:100171977"/>
<dbReference type="CTD" id="9847"/>
<dbReference type="InParanoid" id="Q5RDC8"/>
<dbReference type="OrthoDB" id="419768at2759"/>
<dbReference type="Proteomes" id="UP000001595">
    <property type="component" value="Unplaced"/>
</dbReference>
<dbReference type="GO" id="GO:0005938">
    <property type="term" value="C:cell cortex"/>
    <property type="evidence" value="ECO:0000250"/>
    <property type="project" value="UniProtKB"/>
</dbReference>
<dbReference type="GO" id="GO:0030659">
    <property type="term" value="C:cytoplasmic vesicle membrane"/>
    <property type="evidence" value="ECO:0000250"/>
    <property type="project" value="UniProtKB"/>
</dbReference>
<dbReference type="GO" id="GO:0005886">
    <property type="term" value="C:plasma membrane"/>
    <property type="evidence" value="ECO:0000250"/>
    <property type="project" value="UniProtKB"/>
</dbReference>
<dbReference type="GO" id="GO:0032587">
    <property type="term" value="C:ruffle membrane"/>
    <property type="evidence" value="ECO:0000250"/>
    <property type="project" value="UniProtKB"/>
</dbReference>
<dbReference type="GO" id="GO:0005509">
    <property type="term" value="F:calcium ion binding"/>
    <property type="evidence" value="ECO:0000250"/>
    <property type="project" value="UniProtKB"/>
</dbReference>
<dbReference type="GO" id="GO:0005544">
    <property type="term" value="F:calcium-dependent phospholipid binding"/>
    <property type="evidence" value="ECO:0000250"/>
    <property type="project" value="UniProtKB"/>
</dbReference>
<dbReference type="GO" id="GO:0008286">
    <property type="term" value="P:insulin receptor signaling pathway"/>
    <property type="evidence" value="ECO:0000250"/>
    <property type="project" value="UniProtKB"/>
</dbReference>
<dbReference type="GO" id="GO:0065002">
    <property type="term" value="P:intracellular protein transmembrane transport"/>
    <property type="evidence" value="ECO:0000250"/>
    <property type="project" value="UniProtKB"/>
</dbReference>
<dbReference type="GO" id="GO:0010828">
    <property type="term" value="P:positive regulation of D-glucose transmembrane transport"/>
    <property type="evidence" value="ECO:0000250"/>
    <property type="project" value="UniProtKB"/>
</dbReference>
<dbReference type="GO" id="GO:0090314">
    <property type="term" value="P:positive regulation of protein targeting to membrane"/>
    <property type="evidence" value="ECO:0000250"/>
    <property type="project" value="UniProtKB"/>
</dbReference>
<dbReference type="GO" id="GO:0031340">
    <property type="term" value="P:positive regulation of vesicle fusion"/>
    <property type="evidence" value="ECO:0000250"/>
    <property type="project" value="UniProtKB"/>
</dbReference>
<dbReference type="GO" id="GO:0072659">
    <property type="term" value="P:protein localization to plasma membrane"/>
    <property type="evidence" value="ECO:0007669"/>
    <property type="project" value="TreeGrafter"/>
</dbReference>
<dbReference type="CDD" id="cd08688">
    <property type="entry name" value="C2_KIAA0528-like"/>
    <property type="match status" value="1"/>
</dbReference>
<dbReference type="FunFam" id="2.60.40.150:FF:000020">
    <property type="entry name" value="C2 calcium dependent domain containing 5"/>
    <property type="match status" value="1"/>
</dbReference>
<dbReference type="Gene3D" id="2.60.40.150">
    <property type="entry name" value="C2 domain"/>
    <property type="match status" value="1"/>
</dbReference>
<dbReference type="InterPro" id="IPR037785">
    <property type="entry name" value="C2_C2CD5"/>
</dbReference>
<dbReference type="InterPro" id="IPR000008">
    <property type="entry name" value="C2_dom"/>
</dbReference>
<dbReference type="InterPro" id="IPR035892">
    <property type="entry name" value="C2_domain_sf"/>
</dbReference>
<dbReference type="InterPro" id="IPR038983">
    <property type="entry name" value="C2CD5"/>
</dbReference>
<dbReference type="InterPro" id="IPR056430">
    <property type="entry name" value="C2CD5_YbjQ-like_dom"/>
</dbReference>
<dbReference type="InterPro" id="IPR056431">
    <property type="entry name" value="C2CD5_YbjQ-rel_dom"/>
</dbReference>
<dbReference type="PANTHER" id="PTHR37412">
    <property type="entry name" value="C2 DOMAIN-CONTAINING PROTEIN 5"/>
    <property type="match status" value="1"/>
</dbReference>
<dbReference type="PANTHER" id="PTHR37412:SF2">
    <property type="entry name" value="C2 DOMAIN-CONTAINING PROTEIN 5"/>
    <property type="match status" value="1"/>
</dbReference>
<dbReference type="Pfam" id="PF00168">
    <property type="entry name" value="C2"/>
    <property type="match status" value="1"/>
</dbReference>
<dbReference type="Pfam" id="PF23025">
    <property type="entry name" value="YbjQ_2"/>
    <property type="match status" value="4"/>
</dbReference>
<dbReference type="Pfam" id="PF23028">
    <property type="entry name" value="YbjQ_3"/>
    <property type="match status" value="1"/>
</dbReference>
<dbReference type="SMART" id="SM00239">
    <property type="entry name" value="C2"/>
    <property type="match status" value="1"/>
</dbReference>
<dbReference type="SUPFAM" id="SSF49562">
    <property type="entry name" value="C2 domain (Calcium/lipid-binding domain, CaLB)"/>
    <property type="match status" value="1"/>
</dbReference>
<dbReference type="PROSITE" id="PS50004">
    <property type="entry name" value="C2"/>
    <property type="match status" value="1"/>
</dbReference>